<organism>
    <name type="scientific">Yersinia pseudotuberculosis serotype O:1b (strain IP 31758)</name>
    <dbReference type="NCBI Taxonomy" id="349747"/>
    <lineage>
        <taxon>Bacteria</taxon>
        <taxon>Pseudomonadati</taxon>
        <taxon>Pseudomonadota</taxon>
        <taxon>Gammaproteobacteria</taxon>
        <taxon>Enterobacterales</taxon>
        <taxon>Yersiniaceae</taxon>
        <taxon>Yersinia</taxon>
    </lineage>
</organism>
<feature type="chain" id="PRO_1000084972" description="DNA polymerase IV">
    <location>
        <begin position="1"/>
        <end position="352"/>
    </location>
</feature>
<feature type="domain" description="UmuC" evidence="1">
    <location>
        <begin position="4"/>
        <end position="185"/>
    </location>
</feature>
<feature type="active site" evidence="1">
    <location>
        <position position="104"/>
    </location>
</feature>
<feature type="binding site" evidence="1">
    <location>
        <position position="8"/>
    </location>
    <ligand>
        <name>Mg(2+)</name>
        <dbReference type="ChEBI" id="CHEBI:18420"/>
    </ligand>
</feature>
<feature type="binding site" evidence="1">
    <location>
        <position position="103"/>
    </location>
    <ligand>
        <name>Mg(2+)</name>
        <dbReference type="ChEBI" id="CHEBI:18420"/>
    </ligand>
</feature>
<feature type="site" description="Substrate discrimination" evidence="1">
    <location>
        <position position="13"/>
    </location>
</feature>
<sequence>MRKIIHVDMDCFFAAVEMRDDPRLRDIPLAIGGSKERRGVISTANYPARRYGVRSAMPTAMAFKLCPQLTLLPGRMAAYKEASQHIREIFARYTPLIEPLSLDEAYLDVSDSLACGGSATLIAQEIRQSIASELNLTASAGIAPIKFLAKIASELNKPNGQYVITPNQIQPFLQDLPLSKIPGVGAVTAKRLQALGLVTCGEIQKYPLAELLKHFGKFGRVLWERSHGIDEREISPDRLRKSVGVEKTLAEDIYDWESCEALIEELYLELETRLRKVKPDLHIARQGVKLKFHDFQQTTQEHTWPVLNKADLLQIAHAAWNERRAERGVRLVGLHVTLLDPQLERQLLLDWG</sequence>
<protein>
    <recommendedName>
        <fullName evidence="1">DNA polymerase IV</fullName>
        <shortName evidence="1">Pol IV</shortName>
        <ecNumber evidence="1">2.7.7.7</ecNumber>
    </recommendedName>
</protein>
<reference key="1">
    <citation type="journal article" date="2007" name="PLoS Genet.">
        <title>The complete genome sequence of Yersinia pseudotuberculosis IP31758, the causative agent of Far East scarlet-like fever.</title>
        <authorList>
            <person name="Eppinger M."/>
            <person name="Rosovitz M.J."/>
            <person name="Fricke W.F."/>
            <person name="Rasko D.A."/>
            <person name="Kokorina G."/>
            <person name="Fayolle C."/>
            <person name="Lindler L.E."/>
            <person name="Carniel E."/>
            <person name="Ravel J."/>
        </authorList>
    </citation>
    <scope>NUCLEOTIDE SEQUENCE [LARGE SCALE GENOMIC DNA]</scope>
    <source>
        <strain>IP 31758</strain>
    </source>
</reference>
<evidence type="ECO:0000255" key="1">
    <source>
        <dbReference type="HAMAP-Rule" id="MF_01113"/>
    </source>
</evidence>
<accession>A7FLI9</accession>
<dbReference type="EC" id="2.7.7.7" evidence="1"/>
<dbReference type="EMBL" id="CP000720">
    <property type="protein sequence ID" value="ABS49113.1"/>
    <property type="molecule type" value="Genomic_DNA"/>
</dbReference>
<dbReference type="RefSeq" id="WP_011191844.1">
    <property type="nucleotide sequence ID" value="NC_009708.1"/>
</dbReference>
<dbReference type="SMR" id="A7FLI9"/>
<dbReference type="GeneID" id="49787049"/>
<dbReference type="KEGG" id="ypi:YpsIP31758_3157"/>
<dbReference type="HOGENOM" id="CLU_012348_1_2_6"/>
<dbReference type="Proteomes" id="UP000002412">
    <property type="component" value="Chromosome"/>
</dbReference>
<dbReference type="GO" id="GO:0005829">
    <property type="term" value="C:cytosol"/>
    <property type="evidence" value="ECO:0007669"/>
    <property type="project" value="TreeGrafter"/>
</dbReference>
<dbReference type="GO" id="GO:0003684">
    <property type="term" value="F:damaged DNA binding"/>
    <property type="evidence" value="ECO:0007669"/>
    <property type="project" value="InterPro"/>
</dbReference>
<dbReference type="GO" id="GO:0003887">
    <property type="term" value="F:DNA-directed DNA polymerase activity"/>
    <property type="evidence" value="ECO:0007669"/>
    <property type="project" value="UniProtKB-UniRule"/>
</dbReference>
<dbReference type="GO" id="GO:0000287">
    <property type="term" value="F:magnesium ion binding"/>
    <property type="evidence" value="ECO:0007669"/>
    <property type="project" value="UniProtKB-UniRule"/>
</dbReference>
<dbReference type="GO" id="GO:0006261">
    <property type="term" value="P:DNA-templated DNA replication"/>
    <property type="evidence" value="ECO:0007669"/>
    <property type="project" value="UniProtKB-UniRule"/>
</dbReference>
<dbReference type="GO" id="GO:0042276">
    <property type="term" value="P:error-prone translesion synthesis"/>
    <property type="evidence" value="ECO:0007669"/>
    <property type="project" value="TreeGrafter"/>
</dbReference>
<dbReference type="GO" id="GO:0009432">
    <property type="term" value="P:SOS response"/>
    <property type="evidence" value="ECO:0007669"/>
    <property type="project" value="TreeGrafter"/>
</dbReference>
<dbReference type="CDD" id="cd03586">
    <property type="entry name" value="PolY_Pol_IV_kappa"/>
    <property type="match status" value="1"/>
</dbReference>
<dbReference type="FunFam" id="1.10.150.20:FF:000019">
    <property type="entry name" value="DNA polymerase IV"/>
    <property type="match status" value="1"/>
</dbReference>
<dbReference type="FunFam" id="3.30.1490.100:FF:000002">
    <property type="entry name" value="DNA polymerase IV"/>
    <property type="match status" value="1"/>
</dbReference>
<dbReference type="FunFam" id="3.30.70.270:FF:000002">
    <property type="entry name" value="DNA polymerase IV"/>
    <property type="match status" value="1"/>
</dbReference>
<dbReference type="FunFam" id="3.40.1170.60:FF:000001">
    <property type="entry name" value="DNA polymerase IV"/>
    <property type="match status" value="1"/>
</dbReference>
<dbReference type="Gene3D" id="3.30.70.270">
    <property type="match status" value="1"/>
</dbReference>
<dbReference type="Gene3D" id="3.40.1170.60">
    <property type="match status" value="1"/>
</dbReference>
<dbReference type="Gene3D" id="1.10.150.20">
    <property type="entry name" value="5' to 3' exonuclease, C-terminal subdomain"/>
    <property type="match status" value="1"/>
</dbReference>
<dbReference type="Gene3D" id="3.30.1490.100">
    <property type="entry name" value="DNA polymerase, Y-family, little finger domain"/>
    <property type="match status" value="1"/>
</dbReference>
<dbReference type="HAMAP" id="MF_01113">
    <property type="entry name" value="DNApol_IV"/>
    <property type="match status" value="1"/>
</dbReference>
<dbReference type="InterPro" id="IPR043502">
    <property type="entry name" value="DNA/RNA_pol_sf"/>
</dbReference>
<dbReference type="InterPro" id="IPR036775">
    <property type="entry name" value="DNA_pol_Y-fam_lit_finger_sf"/>
</dbReference>
<dbReference type="InterPro" id="IPR017961">
    <property type="entry name" value="DNA_pol_Y-fam_little_finger"/>
</dbReference>
<dbReference type="InterPro" id="IPR050116">
    <property type="entry name" value="DNA_polymerase-Y"/>
</dbReference>
<dbReference type="InterPro" id="IPR022880">
    <property type="entry name" value="DNApol_IV"/>
</dbReference>
<dbReference type="InterPro" id="IPR053848">
    <property type="entry name" value="IMS_HHH_1"/>
</dbReference>
<dbReference type="InterPro" id="IPR043128">
    <property type="entry name" value="Rev_trsase/Diguanyl_cyclase"/>
</dbReference>
<dbReference type="InterPro" id="IPR001126">
    <property type="entry name" value="UmuC"/>
</dbReference>
<dbReference type="NCBIfam" id="NF002677">
    <property type="entry name" value="PRK02406.1"/>
    <property type="match status" value="1"/>
</dbReference>
<dbReference type="PANTHER" id="PTHR11076:SF33">
    <property type="entry name" value="DNA POLYMERASE KAPPA"/>
    <property type="match status" value="1"/>
</dbReference>
<dbReference type="PANTHER" id="PTHR11076">
    <property type="entry name" value="DNA REPAIR POLYMERASE UMUC / TRANSFERASE FAMILY MEMBER"/>
    <property type="match status" value="1"/>
</dbReference>
<dbReference type="Pfam" id="PF00817">
    <property type="entry name" value="IMS"/>
    <property type="match status" value="1"/>
</dbReference>
<dbReference type="Pfam" id="PF11799">
    <property type="entry name" value="IMS_C"/>
    <property type="match status" value="1"/>
</dbReference>
<dbReference type="Pfam" id="PF21999">
    <property type="entry name" value="IMS_HHH_1"/>
    <property type="match status" value="1"/>
</dbReference>
<dbReference type="SUPFAM" id="SSF56672">
    <property type="entry name" value="DNA/RNA polymerases"/>
    <property type="match status" value="1"/>
</dbReference>
<dbReference type="SUPFAM" id="SSF100879">
    <property type="entry name" value="Lesion bypass DNA polymerase (Y-family), little finger domain"/>
    <property type="match status" value="1"/>
</dbReference>
<dbReference type="PROSITE" id="PS50173">
    <property type="entry name" value="UMUC"/>
    <property type="match status" value="1"/>
</dbReference>
<name>DPO4_YERP3</name>
<comment type="function">
    <text evidence="1">Poorly processive, error-prone DNA polymerase involved in untargeted mutagenesis. Copies undamaged DNA at stalled replication forks, which arise in vivo from mismatched or misaligned primer ends. These misaligned primers can be extended by PolIV. Exhibits no 3'-5' exonuclease (proofreading) activity. May be involved in translesional synthesis, in conjunction with the beta clamp from PolIII.</text>
</comment>
<comment type="catalytic activity">
    <reaction evidence="1">
        <text>DNA(n) + a 2'-deoxyribonucleoside 5'-triphosphate = DNA(n+1) + diphosphate</text>
        <dbReference type="Rhea" id="RHEA:22508"/>
        <dbReference type="Rhea" id="RHEA-COMP:17339"/>
        <dbReference type="Rhea" id="RHEA-COMP:17340"/>
        <dbReference type="ChEBI" id="CHEBI:33019"/>
        <dbReference type="ChEBI" id="CHEBI:61560"/>
        <dbReference type="ChEBI" id="CHEBI:173112"/>
        <dbReference type="EC" id="2.7.7.7"/>
    </reaction>
</comment>
<comment type="cofactor">
    <cofactor evidence="1">
        <name>Mg(2+)</name>
        <dbReference type="ChEBI" id="CHEBI:18420"/>
    </cofactor>
    <text evidence="1">Binds 2 magnesium ions per subunit.</text>
</comment>
<comment type="subunit">
    <text evidence="1">Monomer.</text>
</comment>
<comment type="subcellular location">
    <subcellularLocation>
        <location evidence="1">Cytoplasm</location>
    </subcellularLocation>
</comment>
<comment type="similarity">
    <text evidence="1">Belongs to the DNA polymerase type-Y family.</text>
</comment>
<keyword id="KW-0963">Cytoplasm</keyword>
<keyword id="KW-0227">DNA damage</keyword>
<keyword id="KW-0234">DNA repair</keyword>
<keyword id="KW-0235">DNA replication</keyword>
<keyword id="KW-0238">DNA-binding</keyword>
<keyword id="KW-0239">DNA-directed DNA polymerase</keyword>
<keyword id="KW-0460">Magnesium</keyword>
<keyword id="KW-0479">Metal-binding</keyword>
<keyword id="KW-0515">Mutator protein</keyword>
<keyword id="KW-0548">Nucleotidyltransferase</keyword>
<keyword id="KW-0808">Transferase</keyword>
<gene>
    <name evidence="1" type="primary">dinB</name>
    <name type="ordered locus">YpsIP31758_3157</name>
</gene>
<proteinExistence type="inferred from homology"/>